<evidence type="ECO:0000250" key="1"/>
<evidence type="ECO:0000250" key="2">
    <source>
        <dbReference type="UniProtKB" id="P41159"/>
    </source>
</evidence>
<evidence type="ECO:0000250" key="3">
    <source>
        <dbReference type="UniProtKB" id="P41160"/>
    </source>
</evidence>
<evidence type="ECO:0000250" key="4">
    <source>
        <dbReference type="UniProtKB" id="P50596"/>
    </source>
</evidence>
<evidence type="ECO:0000255" key="5"/>
<evidence type="ECO:0000305" key="6"/>
<reference key="1">
    <citation type="journal article" date="2000" name="Cytogenet. Cell Genet.">
        <title>Cloning of leptin cDNA and assignment to the long arm of chromosome 5 in the marsupial Sminthopsis crassicaudata.</title>
        <authorList>
            <person name="Hope P.J."/>
            <person name="Webb G.C."/>
            <person name="Lok S."/>
            <person name="Hope R.M."/>
            <person name="Turnbull H."/>
            <person name="Jelmberg A.C."/>
            <person name="Wittert G.A."/>
        </authorList>
    </citation>
    <scope>NUCLEOTIDE SEQUENCE [MRNA]</scope>
</reference>
<gene>
    <name type="primary">LEP</name>
    <name type="synonym">OB</name>
</gene>
<keyword id="KW-1015">Disulfide bond</keyword>
<keyword id="KW-0550">Obesity</keyword>
<keyword id="KW-0964">Secreted</keyword>
<keyword id="KW-0732">Signal</keyword>
<name>LEP_SMICR</name>
<accession>Q9XSW9</accession>
<organism>
    <name type="scientific">Sminthopsis crassicaudata</name>
    <name type="common">Fat-tailed dunnart</name>
    <name type="synonym">Phascogale crassicaudata</name>
    <dbReference type="NCBI Taxonomy" id="9301"/>
    <lineage>
        <taxon>Eukaryota</taxon>
        <taxon>Metazoa</taxon>
        <taxon>Chordata</taxon>
        <taxon>Craniata</taxon>
        <taxon>Vertebrata</taxon>
        <taxon>Euteleostomi</taxon>
        <taxon>Mammalia</taxon>
        <taxon>Metatheria</taxon>
        <taxon>Dasyuromorphia</taxon>
        <taxon>Dasyuridae</taxon>
        <taxon>Sminthopsis</taxon>
    </lineage>
</organism>
<dbReference type="EMBL" id="AF159713">
    <property type="protein sequence ID" value="AAD44337.1"/>
    <property type="molecule type" value="mRNA"/>
</dbReference>
<dbReference type="SMR" id="Q9XSW9"/>
<dbReference type="GO" id="GO:0005615">
    <property type="term" value="C:extracellular space"/>
    <property type="evidence" value="ECO:0007669"/>
    <property type="project" value="TreeGrafter"/>
</dbReference>
<dbReference type="GO" id="GO:0005179">
    <property type="term" value="F:hormone activity"/>
    <property type="evidence" value="ECO:0007669"/>
    <property type="project" value="InterPro"/>
</dbReference>
<dbReference type="GO" id="GO:0051428">
    <property type="term" value="F:peptide hormone receptor binding"/>
    <property type="evidence" value="ECO:0007669"/>
    <property type="project" value="TreeGrafter"/>
</dbReference>
<dbReference type="GO" id="GO:1990051">
    <property type="term" value="P:activation of protein kinase C activity"/>
    <property type="evidence" value="ECO:0000250"/>
    <property type="project" value="UniProtKB"/>
</dbReference>
<dbReference type="GO" id="GO:0098868">
    <property type="term" value="P:bone growth"/>
    <property type="evidence" value="ECO:0000250"/>
    <property type="project" value="UniProtKB"/>
</dbReference>
<dbReference type="GO" id="GO:0044320">
    <property type="term" value="P:cellular response to leptin stimulus"/>
    <property type="evidence" value="ECO:0000250"/>
    <property type="project" value="UniProtKB"/>
</dbReference>
<dbReference type="GO" id="GO:0006112">
    <property type="term" value="P:energy reserve metabolic process"/>
    <property type="evidence" value="ECO:0007669"/>
    <property type="project" value="TreeGrafter"/>
</dbReference>
<dbReference type="GO" id="GO:0050892">
    <property type="term" value="P:intestinal absorption"/>
    <property type="evidence" value="ECO:0000250"/>
    <property type="project" value="UniProtKB"/>
</dbReference>
<dbReference type="GO" id="GO:0033210">
    <property type="term" value="P:leptin-mediated signaling pathway"/>
    <property type="evidence" value="ECO:0000250"/>
    <property type="project" value="UniProtKB"/>
</dbReference>
<dbReference type="GO" id="GO:0006629">
    <property type="term" value="P:lipid metabolic process"/>
    <property type="evidence" value="ECO:0007669"/>
    <property type="project" value="TreeGrafter"/>
</dbReference>
<dbReference type="GO" id="GO:0038108">
    <property type="term" value="P:negative regulation of appetite by leptin-mediated signaling pathway"/>
    <property type="evidence" value="ECO:0000250"/>
    <property type="project" value="UniProtKB"/>
</dbReference>
<dbReference type="GO" id="GO:0010507">
    <property type="term" value="P:negative regulation of autophagy"/>
    <property type="evidence" value="ECO:0000250"/>
    <property type="project" value="UniProtKB"/>
</dbReference>
<dbReference type="GO" id="GO:0046325">
    <property type="term" value="P:negative regulation of D-glucose import"/>
    <property type="evidence" value="ECO:0000250"/>
    <property type="project" value="UniProtKB"/>
</dbReference>
<dbReference type="GO" id="GO:0006909">
    <property type="term" value="P:phagocytosis"/>
    <property type="evidence" value="ECO:0000250"/>
    <property type="project" value="UniProtKB"/>
</dbReference>
<dbReference type="GO" id="GO:0032735">
    <property type="term" value="P:positive regulation of interleukin-12 production"/>
    <property type="evidence" value="ECO:0000250"/>
    <property type="project" value="UniProtKB"/>
</dbReference>
<dbReference type="GO" id="GO:0032755">
    <property type="term" value="P:positive regulation of interleukin-6 production"/>
    <property type="evidence" value="ECO:0000250"/>
    <property type="project" value="UniProtKB"/>
</dbReference>
<dbReference type="GO" id="GO:0032757">
    <property type="term" value="P:positive regulation of interleukin-8 production"/>
    <property type="evidence" value="ECO:0000250"/>
    <property type="project" value="UniProtKB"/>
</dbReference>
<dbReference type="GO" id="GO:0043410">
    <property type="term" value="P:positive regulation of MAPK cascade"/>
    <property type="evidence" value="ECO:0000250"/>
    <property type="project" value="UniProtKB"/>
</dbReference>
<dbReference type="GO" id="GO:1900745">
    <property type="term" value="P:positive regulation of p38MAPK cascade"/>
    <property type="evidence" value="ECO:0000250"/>
    <property type="project" value="UniProtKB"/>
</dbReference>
<dbReference type="GO" id="GO:0051897">
    <property type="term" value="P:positive regulation of phosphatidylinositol 3-kinase/protein kinase B signal transduction"/>
    <property type="evidence" value="ECO:0000250"/>
    <property type="project" value="UniProtKB"/>
</dbReference>
<dbReference type="GO" id="GO:0046427">
    <property type="term" value="P:positive regulation of receptor signaling pathway via JAK-STAT"/>
    <property type="evidence" value="ECO:0000250"/>
    <property type="project" value="UniProtKB"/>
</dbReference>
<dbReference type="GO" id="GO:0042102">
    <property type="term" value="P:positive regulation of T cell proliferation"/>
    <property type="evidence" value="ECO:0000250"/>
    <property type="project" value="UniProtKB"/>
</dbReference>
<dbReference type="GO" id="GO:0032008">
    <property type="term" value="P:positive regulation of TOR signaling"/>
    <property type="evidence" value="ECO:0000250"/>
    <property type="project" value="UniProtKB"/>
</dbReference>
<dbReference type="GO" id="GO:0032760">
    <property type="term" value="P:positive regulation of tumor necrosis factor production"/>
    <property type="evidence" value="ECO:0000250"/>
    <property type="project" value="UniProtKB"/>
</dbReference>
<dbReference type="GO" id="GO:0032310">
    <property type="term" value="P:prostaglandin secretion"/>
    <property type="evidence" value="ECO:0000250"/>
    <property type="project" value="UniProtKB"/>
</dbReference>
<dbReference type="GO" id="GO:0045765">
    <property type="term" value="P:regulation of angiogenesis"/>
    <property type="evidence" value="ECO:0000250"/>
    <property type="project" value="UniProtKB"/>
</dbReference>
<dbReference type="GO" id="GO:0046850">
    <property type="term" value="P:regulation of bone remodeling"/>
    <property type="evidence" value="ECO:0000250"/>
    <property type="project" value="UniProtKB"/>
</dbReference>
<dbReference type="GO" id="GO:0090335">
    <property type="term" value="P:regulation of brown fat cell differentiation"/>
    <property type="evidence" value="ECO:0000250"/>
    <property type="project" value="UniProtKB"/>
</dbReference>
<dbReference type="GO" id="GO:0051726">
    <property type="term" value="P:regulation of cell cycle"/>
    <property type="evidence" value="ECO:0000250"/>
    <property type="project" value="UniProtKB"/>
</dbReference>
<dbReference type="GO" id="GO:1900015">
    <property type="term" value="P:regulation of cytokine production involved in inflammatory response"/>
    <property type="evidence" value="ECO:0000250"/>
    <property type="project" value="UniProtKB"/>
</dbReference>
<dbReference type="GO" id="GO:0001936">
    <property type="term" value="P:regulation of endothelial cell proliferation"/>
    <property type="evidence" value="ECO:0000250"/>
    <property type="project" value="UniProtKB"/>
</dbReference>
<dbReference type="GO" id="GO:0032814">
    <property type="term" value="P:regulation of natural killer cell activation"/>
    <property type="evidence" value="ECO:0000250"/>
    <property type="project" value="UniProtKB"/>
</dbReference>
<dbReference type="GO" id="GO:0042269">
    <property type="term" value="P:regulation of natural killer cell mediated cytotoxicity"/>
    <property type="evidence" value="ECO:0000250"/>
    <property type="project" value="UniProtKB"/>
</dbReference>
<dbReference type="GO" id="GO:0032817">
    <property type="term" value="P:regulation of natural killer cell proliferation"/>
    <property type="evidence" value="ECO:0000250"/>
    <property type="project" value="UniProtKB"/>
</dbReference>
<dbReference type="GO" id="GO:0050999">
    <property type="term" value="P:regulation of nitric-oxide synthase activity"/>
    <property type="evidence" value="ECO:0000250"/>
    <property type="project" value="UniProtKB"/>
</dbReference>
<dbReference type="GO" id="GO:0032868">
    <property type="term" value="P:response to insulin"/>
    <property type="evidence" value="ECO:0007669"/>
    <property type="project" value="TreeGrafter"/>
</dbReference>
<dbReference type="GO" id="GO:0019953">
    <property type="term" value="P:sexual reproduction"/>
    <property type="evidence" value="ECO:0000250"/>
    <property type="project" value="UniProtKB"/>
</dbReference>
<dbReference type="GO" id="GO:0030217">
    <property type="term" value="P:T cell differentiation"/>
    <property type="evidence" value="ECO:0000250"/>
    <property type="project" value="UniProtKB"/>
</dbReference>
<dbReference type="FunFam" id="1.20.1250.10:FF:000008">
    <property type="entry name" value="Leptin"/>
    <property type="match status" value="1"/>
</dbReference>
<dbReference type="Gene3D" id="1.20.1250.10">
    <property type="match status" value="1"/>
</dbReference>
<dbReference type="InterPro" id="IPR009079">
    <property type="entry name" value="4_helix_cytokine-like_core"/>
</dbReference>
<dbReference type="InterPro" id="IPR000065">
    <property type="entry name" value="Leptin"/>
</dbReference>
<dbReference type="PANTHER" id="PTHR11724">
    <property type="entry name" value="LEPTIN"/>
    <property type="match status" value="1"/>
</dbReference>
<dbReference type="PANTHER" id="PTHR11724:SF1">
    <property type="entry name" value="LEPTIN"/>
    <property type="match status" value="1"/>
</dbReference>
<dbReference type="Pfam" id="PF02024">
    <property type="entry name" value="Leptin"/>
    <property type="match status" value="1"/>
</dbReference>
<dbReference type="PIRSF" id="PIRSF001837">
    <property type="entry name" value="Leptin"/>
    <property type="match status" value="1"/>
</dbReference>
<dbReference type="PRINTS" id="PR00495">
    <property type="entry name" value="LEPTIN"/>
</dbReference>
<dbReference type="SUPFAM" id="SSF47266">
    <property type="entry name" value="4-helical cytokines"/>
    <property type="match status" value="1"/>
</dbReference>
<sequence length="167" mass="18891">MHCVPLFCFLWFCHHLYYSQAVPIRKVQDDTKTLTKTIITRINDISHMYSISAKQRVTGLDFIPGLHPFQSLSDMDQTLAIYQQILSNLSSRNMVQISNDLENLRDLLHLLGSLKSCPFDEAGGLSALGNLEGVMEASLYSTEVVTLTRLQKSLYVMLQQLDLIHGC</sequence>
<comment type="function">
    <text evidence="2 3 4">Key player in the regulation of energy balance and body weight control. Once released into the circulation, has central and peripheral effects by binding LEPR, found in many tissues, which results in the activation of several major signaling pathways (By similarity). In the hypothalamus, acts as an appetite-regulating factor that induces a decrease in food intake and an increase in energy consumption by inducing anorexinogenic factors and suppressing orexigenic neuropeptides, also regulates bone mass and secretion of hypothalamo-pituitary-adrenal hormones. In the periphery, increases basal metabolism, influences reproductive function, regulates pancreatic beta-cell function and insulin secretion, is pro-angiogenic for endothelial cell and affects innate and adaptive immunity (By similarity). In the arcuate nucleus of the hypothalamus, activates by depolarization POMC neurons inducing FOS and SOCS3 expression to release anorexigenic peptides and inhibits by hyperpolarization NPY neurons inducing SOCS3 with a consequent reduction on release of orexigenic peptides (By similarity). In addition to its known satiety inducing effect, has a modulatory role in nutrient absorption. In the intestine, reduces glucose absorption by enterocytes by activating PKC and leading to a sequential activation of p38, PI3K and ERK signaling pathways which exerts an inhibitory effect on glucose absorption (By similarity). Acts as a growth factor on certain tissues, through the activation of different signaling pathways increases expression of genes involved in cell cycle regulation such as CCND1, via JAK2-STAT3 pathway, or VEGFA, via MAPK1/3 and PI3K-AKT1 pathways (By similarity). May also play an apoptotic role via JAK2-STAT3 pathway and up-regulation of BIRC5 expression. Pro-angiogenic, has mitogenic activity on vascular endothelial cells and plays a role in matrix remodeling by regulating the expression of matrix metalloproteinases (MMPs) and tissue inhibitors of metalloproteinases (TIMPs). In innate immunity, modulates the activity and function of neutrophils by increasing chemotaxis and the secretion of oxygen radicals. Increases phagocytosis by macrophages and enhances secretion of pro-inflammatory mediators. Increases cytotoxic ability of NK cells. Plays a pro-inflammatory role, in synergy with IL1B, by inducing NOS2 which promotes the production of IL6, IL8 and Prostaglandin E2, through a signaling pathway that involves JAK2, PI3K, MAP2K1/MEK1 and MAPK14/p38 (By similarity). In adaptive immunity, promotes the switch of memory T-cells towards T helper-1 cell immune responses (By similarity). Increases CD4(+)CD25(-) T-cell proliferation and reduces autophagy during TCR (T-cell receptor) stimulation, through MTOR signaling pathway activation and BCL2 up-regulation (By similarity).</text>
</comment>
<comment type="subcellular location">
    <subcellularLocation>
        <location evidence="2">Secreted</location>
    </subcellularLocation>
</comment>
<comment type="similarity">
    <text evidence="6">Belongs to the leptin family.</text>
</comment>
<protein>
    <recommendedName>
        <fullName>Leptin</fullName>
    </recommendedName>
    <alternativeName>
        <fullName>Obesity factor</fullName>
    </alternativeName>
</protein>
<feature type="signal peptide" evidence="5">
    <location>
        <begin position="1"/>
        <end position="21"/>
    </location>
</feature>
<feature type="chain" id="PRO_0000017691" description="Leptin">
    <location>
        <begin position="22"/>
        <end position="167"/>
    </location>
</feature>
<feature type="disulfide bond" evidence="1">
    <location>
        <begin position="117"/>
        <end position="167"/>
    </location>
</feature>
<proteinExistence type="evidence at transcript level"/>